<reference key="1">
    <citation type="journal article" date="2010" name="J. Proteome Res.">
        <title>Molecular diversification of peptide toxins from the tarantula Haplopelma hainanum (Ornithoctonus hainana) venom based on transcriptomic, peptidomic, and genomic analyses.</title>
        <authorList>
            <person name="Tang X."/>
            <person name="Zhang Y."/>
            <person name="Hu W."/>
            <person name="Xu D."/>
            <person name="Tao H."/>
            <person name="Yang X."/>
            <person name="Li Y."/>
            <person name="Jiang L."/>
            <person name="Liang S."/>
        </authorList>
    </citation>
    <scope>NUCLEOTIDE SEQUENCE [LARGE SCALE MRNA]</scope>
    <source>
        <tissue>Venom gland</tissue>
    </source>
</reference>
<organism>
    <name type="scientific">Cyriopagopus hainanus</name>
    <name type="common">Chinese bird spider</name>
    <name type="synonym">Haplopelma hainanum</name>
    <dbReference type="NCBI Taxonomy" id="209901"/>
    <lineage>
        <taxon>Eukaryota</taxon>
        <taxon>Metazoa</taxon>
        <taxon>Ecdysozoa</taxon>
        <taxon>Arthropoda</taxon>
        <taxon>Chelicerata</taxon>
        <taxon>Arachnida</taxon>
        <taxon>Araneae</taxon>
        <taxon>Mygalomorphae</taxon>
        <taxon>Theraphosidae</taxon>
        <taxon>Haplopelma</taxon>
    </lineage>
</organism>
<keyword id="KW-1015">Disulfide bond</keyword>
<keyword id="KW-0872">Ion channel impairing toxin</keyword>
<keyword id="KW-0960">Knottin</keyword>
<keyword id="KW-0964">Secreted</keyword>
<keyword id="KW-0732">Signal</keyword>
<keyword id="KW-0800">Toxin</keyword>
<proteinExistence type="evidence at transcript level"/>
<dbReference type="EMBL" id="GU293028">
    <property type="protein sequence ID" value="ADB56844.1"/>
    <property type="molecule type" value="mRNA"/>
</dbReference>
<dbReference type="SMR" id="D2Y2F1"/>
<dbReference type="ArachnoServer" id="AS001953">
    <property type="toxin name" value="omega-theraphotoxin-Hhn1c"/>
</dbReference>
<dbReference type="GO" id="GO:0005576">
    <property type="term" value="C:extracellular region"/>
    <property type="evidence" value="ECO:0007669"/>
    <property type="project" value="UniProtKB-SubCell"/>
</dbReference>
<dbReference type="GO" id="GO:0008200">
    <property type="term" value="F:ion channel inhibitor activity"/>
    <property type="evidence" value="ECO:0007669"/>
    <property type="project" value="InterPro"/>
</dbReference>
<dbReference type="GO" id="GO:0090729">
    <property type="term" value="F:toxin activity"/>
    <property type="evidence" value="ECO:0007669"/>
    <property type="project" value="UniProtKB-KW"/>
</dbReference>
<dbReference type="InterPro" id="IPR011696">
    <property type="entry name" value="Huwentoxin-1"/>
</dbReference>
<dbReference type="InterPro" id="IPR013140">
    <property type="entry name" value="Huwentoxin_CS1"/>
</dbReference>
<dbReference type="Pfam" id="PF07740">
    <property type="entry name" value="Toxin_12"/>
    <property type="match status" value="1"/>
</dbReference>
<dbReference type="SUPFAM" id="SSF57059">
    <property type="entry name" value="omega toxin-like"/>
    <property type="match status" value="1"/>
</dbReference>
<dbReference type="PROSITE" id="PS60021">
    <property type="entry name" value="HWTX_1"/>
    <property type="match status" value="1"/>
</dbReference>
<name>H9D01_CYRHA</name>
<comment type="function">
    <text evidence="1">Ion channel inhibitor.</text>
</comment>
<comment type="subcellular location">
    <subcellularLocation>
        <location evidence="1">Secreted</location>
    </subcellularLocation>
</comment>
<comment type="tissue specificity">
    <text>Expressed by the venom gland.</text>
</comment>
<comment type="domain">
    <text evidence="1">The presence of a 'disulfide through disulfide knot' structurally defines this protein as a knottin.</text>
</comment>
<comment type="similarity">
    <text evidence="3">Belongs to the neurotoxin 10 (Hwtx-1) family. 17 (Hntx-9) subfamily.</text>
</comment>
<protein>
    <recommendedName>
        <fullName>Omega-theraphotoxin-Hhn1c</fullName>
        <shortName>Omega-TRTX-Hhn1c</shortName>
    </recommendedName>
    <alternativeName>
        <fullName>Hainantoxin-IX-4</fullName>
        <shortName>HNTX-IX-4</shortName>
    </alternativeName>
</protein>
<evidence type="ECO:0000250" key="1"/>
<evidence type="ECO:0000255" key="2"/>
<evidence type="ECO:0000305" key="3"/>
<sequence>MKSIVFVALFGLALLAVVCSASEDAHKELLKEVVRAMVVDKTDAVQAEERECRWYLGGCSQDGDCCKHLQCHSNYEWCIWDGTSSK</sequence>
<accession>D2Y2F1</accession>
<feature type="signal peptide" evidence="2">
    <location>
        <begin position="1"/>
        <end position="21"/>
    </location>
</feature>
<feature type="propeptide" id="PRO_0000400665" evidence="1">
    <location>
        <begin position="22"/>
        <end position="50"/>
    </location>
</feature>
<feature type="peptide" id="PRO_0000400666" description="Omega-theraphotoxin-Hhn1c">
    <location>
        <begin position="51"/>
        <end position="86"/>
    </location>
</feature>
<feature type="disulfide bond" evidence="1">
    <location>
        <begin position="52"/>
        <end position="66"/>
    </location>
</feature>
<feature type="disulfide bond" evidence="1">
    <location>
        <begin position="59"/>
        <end position="71"/>
    </location>
</feature>
<feature type="disulfide bond" evidence="1">
    <location>
        <begin position="65"/>
        <end position="78"/>
    </location>
</feature>